<organism>
    <name type="scientific">Escherichia coli (strain K12)</name>
    <dbReference type="NCBI Taxonomy" id="83333"/>
    <lineage>
        <taxon>Bacteria</taxon>
        <taxon>Pseudomonadati</taxon>
        <taxon>Pseudomonadota</taxon>
        <taxon>Gammaproteobacteria</taxon>
        <taxon>Enterobacterales</taxon>
        <taxon>Enterobacteriaceae</taxon>
        <taxon>Escherichia</taxon>
    </lineage>
</organism>
<protein>
    <recommendedName>
        <fullName>Transposase InsH for insertion sequence element IS5U</fullName>
    </recommendedName>
</protein>
<feature type="chain" id="PRO_0000446261" description="Transposase InsH for insertion sequence element IS5U">
    <location>
        <begin position="1"/>
        <end position="326"/>
    </location>
</feature>
<accession>A0A385XJE6</accession>
<proteinExistence type="inferred from homology"/>
<reference key="1">
    <citation type="journal article" date="1997" name="Science">
        <title>The complete genome sequence of Escherichia coli K-12.</title>
        <authorList>
            <person name="Blattner F.R."/>
            <person name="Plunkett G. III"/>
            <person name="Bloch C.A."/>
            <person name="Perna N.T."/>
            <person name="Burland V."/>
            <person name="Riley M."/>
            <person name="Collado-Vides J."/>
            <person name="Glasner J.D."/>
            <person name="Rode C.K."/>
            <person name="Mayhew G.F."/>
            <person name="Gregor J."/>
            <person name="Davis N.W."/>
            <person name="Kirkpatrick H.A."/>
            <person name="Goeden M.A."/>
            <person name="Rose D.J."/>
            <person name="Mau B."/>
            <person name="Shao Y."/>
        </authorList>
    </citation>
    <scope>NUCLEOTIDE SEQUENCE [LARGE SCALE GENOMIC DNA]</scope>
    <source>
        <strain>K12 / MG1655 / ATCC 47076</strain>
    </source>
</reference>
<sequence>MSHQLTFADSEFSSKRRQTRKEIFLSRMEQILPWQNMVEVIEPFYPKAGNGRRPYPLETMLRIHCMQHWYNLSDGAMEDALYEIASMRLFARLSLDSALPDRTTIMNFRHLLEQHQLARQLFKTINRWLAEAGVMMTQGTLVDATIIEAPSSTKNKEQQRDPEMHQTKKGNQWHFGMKAHIGVDAKSGLTHSLVTTAANEHDLNQLGNLLHGEEQFVSADAGYQGAPQREELAEVDVDWLIAERPGKVRTLKQHPRKNKTAINIEYMKASIRARVEHPFRIIKRQFGFVKARYKGLLKNDNQLAMLFTLANLFRADQMIRQWERSH</sequence>
<name>INH21_ECOLI</name>
<keyword id="KW-0233">DNA recombination</keyword>
<keyword id="KW-0238">DNA-binding</keyword>
<keyword id="KW-1185">Reference proteome</keyword>
<keyword id="KW-0814">Transposable element</keyword>
<keyword id="KW-0815">Transposition</keyword>
<gene>
    <name type="primary">insH21</name>
    <name type="ordered locus">b4711</name>
</gene>
<dbReference type="EMBL" id="U00096">
    <property type="protein sequence ID" value="AYC08198.2"/>
    <property type="molecule type" value="Genomic_DNA"/>
</dbReference>
<dbReference type="RefSeq" id="NP_414793.1">
    <property type="nucleotide sequence ID" value="NC_000913.3"/>
</dbReference>
<dbReference type="RefSeq" id="NP_415084.1">
    <property type="nucleotide sequence ID" value="NC_000913.3"/>
</dbReference>
<dbReference type="RefSeq" id="NP_415189.1">
    <property type="nucleotide sequence ID" value="NC_000913.3"/>
</dbReference>
<dbReference type="RefSeq" id="NP_415847.1">
    <property type="nucleotide sequence ID" value="NC_000913.3"/>
</dbReference>
<dbReference type="RefSeq" id="NP_416535.1">
    <property type="nucleotide sequence ID" value="NC_000913.3"/>
</dbReference>
<dbReference type="RefSeq" id="NP_416696.1">
    <property type="nucleotide sequence ID" value="NC_000913.3"/>
</dbReference>
<dbReference type="RefSeq" id="NP_417456.1">
    <property type="nucleotide sequence ID" value="NC_000913.3"/>
</dbReference>
<dbReference type="RefSeq" id="NP_417685.1">
    <property type="nucleotide sequence ID" value="NC_000913.3"/>
</dbReference>
<dbReference type="RefSeq" id="NP_417962.1">
    <property type="nucleotide sequence ID" value="NC_000913.3"/>
</dbReference>
<dbReference type="RefSeq" id="WP_000019403.1">
    <property type="nucleotide sequence ID" value="NZ_SSZK01000120.1"/>
</dbReference>
<dbReference type="FunCoup" id="A0A385XJE6">
    <property type="interactions" value="11"/>
</dbReference>
<dbReference type="jPOST" id="A0A385XJE6"/>
<dbReference type="EnsemblBacteria" id="AYC08198">
    <property type="protein sequence ID" value="AYC08198"/>
    <property type="gene ID" value="b4711"/>
</dbReference>
<dbReference type="GeneID" id="38094952"/>
<dbReference type="KEGG" id="eco:b0259"/>
<dbReference type="KEGG" id="eco:b0552"/>
<dbReference type="KEGG" id="eco:b0656"/>
<dbReference type="KEGG" id="eco:b2030"/>
<dbReference type="KEGG" id="eco:b2192"/>
<dbReference type="KEGG" id="eco:b2982"/>
<dbReference type="KEGG" id="eco:b3218"/>
<dbReference type="KEGG" id="eco:b3505"/>
<dbReference type="KEGG" id="eco:b4711"/>
<dbReference type="KEGG" id="ecoc:C3026_01250"/>
<dbReference type="KEGG" id="ecoc:C3026_02730"/>
<dbReference type="KEGG" id="ecoc:C3026_03280"/>
<dbReference type="KEGG" id="ecoc:C3026_07795"/>
<dbReference type="KEGG" id="ecoc:C3026_10760"/>
<dbReference type="KEGG" id="ecoc:C3026_11440"/>
<dbReference type="KEGG" id="ecoc:C3026_12250"/>
<dbReference type="KEGG" id="ecoc:C3026_16315"/>
<dbReference type="KEGG" id="ecoc:C3026_17505"/>
<dbReference type="KEGG" id="ecoc:C3026_18985"/>
<dbReference type="KEGG" id="ecoc:C3026_23975"/>
<dbReference type="InParanoid" id="A0A385XJE6"/>
<dbReference type="BioCyc" id="EcoCyc:MONOMER0-4347"/>
<dbReference type="PRO" id="PR:A0A385XJE6"/>
<dbReference type="Proteomes" id="UP000000625">
    <property type="component" value="Chromosome"/>
</dbReference>
<dbReference type="GO" id="GO:0005829">
    <property type="term" value="C:cytosol"/>
    <property type="evidence" value="ECO:0000318"/>
    <property type="project" value="GO_Central"/>
</dbReference>
<dbReference type="GO" id="GO:0003677">
    <property type="term" value="F:DNA binding"/>
    <property type="evidence" value="ECO:0007669"/>
    <property type="project" value="UniProtKB-KW"/>
</dbReference>
<dbReference type="GO" id="GO:0004803">
    <property type="term" value="F:transposase activity"/>
    <property type="evidence" value="ECO:0000318"/>
    <property type="project" value="GO_Central"/>
</dbReference>
<dbReference type="GO" id="GO:0006313">
    <property type="term" value="P:DNA transposition"/>
    <property type="evidence" value="ECO:0000318"/>
    <property type="project" value="GO_Central"/>
</dbReference>
<dbReference type="InterPro" id="IPR047959">
    <property type="entry name" value="Transpos_IS5"/>
</dbReference>
<dbReference type="InterPro" id="IPR002559">
    <property type="entry name" value="Transposase_11"/>
</dbReference>
<dbReference type="InterPro" id="IPR008490">
    <property type="entry name" value="Transposase_InsH_N"/>
</dbReference>
<dbReference type="NCBIfam" id="NF033581">
    <property type="entry name" value="transpos_IS5_4"/>
    <property type="match status" value="1"/>
</dbReference>
<dbReference type="PANTHER" id="PTHR35604">
    <property type="entry name" value="TRANSPOSASE INSH FOR INSERTION SEQUENCE ELEMENT IS5A-RELATED"/>
    <property type="match status" value="1"/>
</dbReference>
<dbReference type="PANTHER" id="PTHR35604:SF2">
    <property type="entry name" value="TRANSPOSASE INSH FOR INSERTION SEQUENCE ELEMENT IS5A-RELATED"/>
    <property type="match status" value="1"/>
</dbReference>
<dbReference type="Pfam" id="PF01609">
    <property type="entry name" value="DDE_Tnp_1"/>
    <property type="match status" value="1"/>
</dbReference>
<dbReference type="Pfam" id="PF05598">
    <property type="entry name" value="DUF772"/>
    <property type="match status" value="1"/>
</dbReference>
<comment type="function">
    <text evidence="1">Involved in the transposition of the insertion sequence IS5.</text>
</comment>
<comment type="similarity">
    <text evidence="1">Belongs to the transposase 11 family.</text>
</comment>
<evidence type="ECO:0000305" key="1"/>